<sequence>MARPKIPRRIECHPPASCFKPNGVPIRQLARVELAPDELEALRLVDQLGLQQQQAALQMQVSRQTLANLVKAARFKVVDCLLHQKALYIQAIDNKSSD</sequence>
<organism>
    <name type="scientific">Vibrio cholerae serotype O1 (strain ATCC 39541 / Classical Ogawa 395 / O395)</name>
    <dbReference type="NCBI Taxonomy" id="345073"/>
    <lineage>
        <taxon>Bacteria</taxon>
        <taxon>Pseudomonadati</taxon>
        <taxon>Pseudomonadota</taxon>
        <taxon>Gammaproteobacteria</taxon>
        <taxon>Vibrionales</taxon>
        <taxon>Vibrionaceae</taxon>
        <taxon>Vibrio</taxon>
    </lineage>
</organism>
<accession>A5F1F9</accession>
<accession>C3M7D5</accession>
<gene>
    <name type="ordered locus">VC0395_0048</name>
    <name type="ordered locus">VC395_A0084</name>
</gene>
<dbReference type="EMBL" id="CP000626">
    <property type="protein sequence ID" value="ABQ19022.1"/>
    <property type="molecule type" value="Genomic_DNA"/>
</dbReference>
<dbReference type="EMBL" id="CP001236">
    <property type="protein sequence ID" value="ACP10931.1"/>
    <property type="molecule type" value="Genomic_DNA"/>
</dbReference>
<dbReference type="RefSeq" id="WP_000113593.1">
    <property type="nucleotide sequence ID" value="NZ_JAACZH010000004.1"/>
</dbReference>
<dbReference type="SMR" id="A5F1F9"/>
<dbReference type="KEGG" id="vco:VC0395_0048"/>
<dbReference type="KEGG" id="vcr:VC395_A0084"/>
<dbReference type="PATRIC" id="fig|345073.21.peg.2842"/>
<dbReference type="eggNOG" id="COG1342">
    <property type="taxonomic scope" value="Bacteria"/>
</dbReference>
<dbReference type="HOGENOM" id="CLU_094511_2_1_6"/>
<dbReference type="OrthoDB" id="280278at2"/>
<dbReference type="Proteomes" id="UP000000249">
    <property type="component" value="Chromosome 1"/>
</dbReference>
<dbReference type="HAMAP" id="MF_00674">
    <property type="entry name" value="UPF0251"/>
    <property type="match status" value="1"/>
</dbReference>
<dbReference type="InterPro" id="IPR002852">
    <property type="entry name" value="UPF0251"/>
</dbReference>
<dbReference type="PANTHER" id="PTHR37478">
    <property type="match status" value="1"/>
</dbReference>
<dbReference type="PANTHER" id="PTHR37478:SF2">
    <property type="entry name" value="UPF0251 PROTEIN TK0562"/>
    <property type="match status" value="1"/>
</dbReference>
<dbReference type="Pfam" id="PF02001">
    <property type="entry name" value="DUF134"/>
    <property type="match status" value="1"/>
</dbReference>
<proteinExistence type="inferred from homology"/>
<protein>
    <recommendedName>
        <fullName evidence="1">UPF0251 protein VC0395_0048/VC395_A0084</fullName>
    </recommendedName>
</protein>
<feature type="chain" id="PRO_1000072723" description="UPF0251 protein VC0395_0048/VC395_A0084">
    <location>
        <begin position="1"/>
        <end position="98"/>
    </location>
</feature>
<comment type="similarity">
    <text evidence="1">Belongs to the UPF0251 family.</text>
</comment>
<name>Y048_VIBC3</name>
<evidence type="ECO:0000255" key="1">
    <source>
        <dbReference type="HAMAP-Rule" id="MF_00674"/>
    </source>
</evidence>
<reference key="1">
    <citation type="submission" date="2007-03" db="EMBL/GenBank/DDBJ databases">
        <authorList>
            <person name="Heidelberg J."/>
        </authorList>
    </citation>
    <scope>NUCLEOTIDE SEQUENCE [LARGE SCALE GENOMIC DNA]</scope>
    <source>
        <strain>ATCC 39541 / Classical Ogawa 395 / O395</strain>
    </source>
</reference>
<reference key="2">
    <citation type="journal article" date="2008" name="PLoS ONE">
        <title>A recalibrated molecular clock and independent origins for the cholera pandemic clones.</title>
        <authorList>
            <person name="Feng L."/>
            <person name="Reeves P.R."/>
            <person name="Lan R."/>
            <person name="Ren Y."/>
            <person name="Gao C."/>
            <person name="Zhou Z."/>
            <person name="Ren Y."/>
            <person name="Cheng J."/>
            <person name="Wang W."/>
            <person name="Wang J."/>
            <person name="Qian W."/>
            <person name="Li D."/>
            <person name="Wang L."/>
        </authorList>
    </citation>
    <scope>NUCLEOTIDE SEQUENCE [LARGE SCALE GENOMIC DNA]</scope>
    <source>
        <strain>ATCC 39541 / Classical Ogawa 395 / O395</strain>
    </source>
</reference>